<accession>G2TRL0</accession>
<feature type="chain" id="PRO_0000416652" description="Putative uncharacterized protein C922.09">
    <location>
        <begin position="1"/>
        <end position="71"/>
    </location>
</feature>
<feature type="transmembrane region" description="Helical" evidence="1">
    <location>
        <begin position="24"/>
        <end position="44"/>
    </location>
</feature>
<reference key="1">
    <citation type="journal article" date="2002" name="Nature">
        <title>The genome sequence of Schizosaccharomyces pombe.</title>
        <authorList>
            <person name="Wood V."/>
            <person name="Gwilliam R."/>
            <person name="Rajandream M.A."/>
            <person name="Lyne M.H."/>
            <person name="Lyne R."/>
            <person name="Stewart A."/>
            <person name="Sgouros J.G."/>
            <person name="Peat N."/>
            <person name="Hayles J."/>
            <person name="Baker S.G."/>
            <person name="Basham D."/>
            <person name="Bowman S."/>
            <person name="Brooks K."/>
            <person name="Brown D."/>
            <person name="Brown S."/>
            <person name="Chillingworth T."/>
            <person name="Churcher C.M."/>
            <person name="Collins M."/>
            <person name="Connor R."/>
            <person name="Cronin A."/>
            <person name="Davis P."/>
            <person name="Feltwell T."/>
            <person name="Fraser A."/>
            <person name="Gentles S."/>
            <person name="Goble A."/>
            <person name="Hamlin N."/>
            <person name="Harris D.E."/>
            <person name="Hidalgo J."/>
            <person name="Hodgson G."/>
            <person name="Holroyd S."/>
            <person name="Hornsby T."/>
            <person name="Howarth S."/>
            <person name="Huckle E.J."/>
            <person name="Hunt S."/>
            <person name="Jagels K."/>
            <person name="James K.D."/>
            <person name="Jones L."/>
            <person name="Jones M."/>
            <person name="Leather S."/>
            <person name="McDonald S."/>
            <person name="McLean J."/>
            <person name="Mooney P."/>
            <person name="Moule S."/>
            <person name="Mungall K.L."/>
            <person name="Murphy L.D."/>
            <person name="Niblett D."/>
            <person name="Odell C."/>
            <person name="Oliver K."/>
            <person name="O'Neil S."/>
            <person name="Pearson D."/>
            <person name="Quail M.A."/>
            <person name="Rabbinowitsch E."/>
            <person name="Rutherford K.M."/>
            <person name="Rutter S."/>
            <person name="Saunders D."/>
            <person name="Seeger K."/>
            <person name="Sharp S."/>
            <person name="Skelton J."/>
            <person name="Simmonds M.N."/>
            <person name="Squares R."/>
            <person name="Squares S."/>
            <person name="Stevens K."/>
            <person name="Taylor K."/>
            <person name="Taylor R.G."/>
            <person name="Tivey A."/>
            <person name="Walsh S.V."/>
            <person name="Warren T."/>
            <person name="Whitehead S."/>
            <person name="Woodward J.R."/>
            <person name="Volckaert G."/>
            <person name="Aert R."/>
            <person name="Robben J."/>
            <person name="Grymonprez B."/>
            <person name="Weltjens I."/>
            <person name="Vanstreels E."/>
            <person name="Rieger M."/>
            <person name="Schaefer M."/>
            <person name="Mueller-Auer S."/>
            <person name="Gabel C."/>
            <person name="Fuchs M."/>
            <person name="Duesterhoeft A."/>
            <person name="Fritzc C."/>
            <person name="Holzer E."/>
            <person name="Moestl D."/>
            <person name="Hilbert H."/>
            <person name="Borzym K."/>
            <person name="Langer I."/>
            <person name="Beck A."/>
            <person name="Lehrach H."/>
            <person name="Reinhardt R."/>
            <person name="Pohl T.M."/>
            <person name="Eger P."/>
            <person name="Zimmermann W."/>
            <person name="Wedler H."/>
            <person name="Wambutt R."/>
            <person name="Purnelle B."/>
            <person name="Goffeau A."/>
            <person name="Cadieu E."/>
            <person name="Dreano S."/>
            <person name="Gloux S."/>
            <person name="Lelaure V."/>
            <person name="Mottier S."/>
            <person name="Galibert F."/>
            <person name="Aves S.J."/>
            <person name="Xiang Z."/>
            <person name="Hunt C."/>
            <person name="Moore K."/>
            <person name="Hurst S.M."/>
            <person name="Lucas M."/>
            <person name="Rochet M."/>
            <person name="Gaillardin C."/>
            <person name="Tallada V.A."/>
            <person name="Garzon A."/>
            <person name="Thode G."/>
            <person name="Daga R.R."/>
            <person name="Cruzado L."/>
            <person name="Jimenez J."/>
            <person name="Sanchez M."/>
            <person name="del Rey F."/>
            <person name="Benito J."/>
            <person name="Dominguez A."/>
            <person name="Revuelta J.L."/>
            <person name="Moreno S."/>
            <person name="Armstrong J."/>
            <person name="Forsburg S.L."/>
            <person name="Cerutti L."/>
            <person name="Lowe T."/>
            <person name="McCombie W.R."/>
            <person name="Paulsen I."/>
            <person name="Potashkin J."/>
            <person name="Shpakovski G.V."/>
            <person name="Ussery D."/>
            <person name="Barrell B.G."/>
            <person name="Nurse P."/>
        </authorList>
    </citation>
    <scope>NUCLEOTIDE SEQUENCE [LARGE SCALE GENOMIC DNA]</scope>
    <source>
        <strain>972 / ATCC 24843</strain>
    </source>
</reference>
<reference key="2">
    <citation type="journal article" date="2011" name="Science">
        <title>Comparative functional genomics of the fission yeasts.</title>
        <authorList>
            <person name="Rhind N."/>
            <person name="Chen Z."/>
            <person name="Yassour M."/>
            <person name="Thompson D.A."/>
            <person name="Haas B.J."/>
            <person name="Habib N."/>
            <person name="Wapinski I."/>
            <person name="Roy S."/>
            <person name="Lin M.F."/>
            <person name="Heiman D.I."/>
            <person name="Young S.K."/>
            <person name="Furuya K."/>
            <person name="Guo Y."/>
            <person name="Pidoux A."/>
            <person name="Chen H.M."/>
            <person name="Robbertse B."/>
            <person name="Goldberg J.M."/>
            <person name="Aoki K."/>
            <person name="Bayne E.H."/>
            <person name="Berlin A.M."/>
            <person name="Desjardins C.A."/>
            <person name="Dobbs E."/>
            <person name="Dukaj L."/>
            <person name="Fan L."/>
            <person name="FitzGerald M.G."/>
            <person name="French C."/>
            <person name="Gujja S."/>
            <person name="Hansen K."/>
            <person name="Keifenheim D."/>
            <person name="Levin J.Z."/>
            <person name="Mosher R.A."/>
            <person name="Mueller C.A."/>
            <person name="Pfiffner J."/>
            <person name="Priest M."/>
            <person name="Russ C."/>
            <person name="Smialowska A."/>
            <person name="Swoboda P."/>
            <person name="Sykes S.M."/>
            <person name="Vaughn M."/>
            <person name="Vengrova S."/>
            <person name="Yoder R."/>
            <person name="Zeng Q."/>
            <person name="Allshire R."/>
            <person name="Baulcombe D."/>
            <person name="Birren B.W."/>
            <person name="Brown W."/>
            <person name="Ekwall K."/>
            <person name="Kellis M."/>
            <person name="Leatherwood J."/>
            <person name="Levin H."/>
            <person name="Margalit H."/>
            <person name="Martienssen R."/>
            <person name="Nieduszynski C.A."/>
            <person name="Spatafora J.W."/>
            <person name="Friedman N."/>
            <person name="Dalgaard J.Z."/>
            <person name="Baumann P."/>
            <person name="Niki H."/>
            <person name="Regev A."/>
            <person name="Nusbaum C."/>
        </authorList>
    </citation>
    <scope>IDENTIFICATION</scope>
</reference>
<protein>
    <recommendedName>
        <fullName>Putative uncharacterized protein C922.09</fullName>
    </recommendedName>
</protein>
<gene>
    <name type="ORF">SPAC922.09</name>
</gene>
<evidence type="ECO:0000255" key="1"/>
<evidence type="ECO:0000305" key="2"/>
<dbReference type="EMBL" id="CU329670">
    <property type="protein sequence ID" value="CCD31347.1"/>
    <property type="molecule type" value="Genomic_DNA"/>
</dbReference>
<dbReference type="RefSeq" id="XP_004001802.1">
    <property type="nucleotide sequence ID" value="XM_004001753.1"/>
</dbReference>
<dbReference type="BioGRID" id="4254439">
    <property type="interactions" value="1"/>
</dbReference>
<dbReference type="PaxDb" id="4896-SPAC922.09.1"/>
<dbReference type="EnsemblFungi" id="SPAC922.09.1">
    <property type="protein sequence ID" value="SPAC922.09.1:pep"/>
    <property type="gene ID" value="SPAC922.09"/>
</dbReference>
<dbReference type="PomBase" id="SPAC922.09"/>
<dbReference type="VEuPathDB" id="FungiDB:SPAC922.09"/>
<dbReference type="HOGENOM" id="CLU_2741489_0_0_1"/>
<dbReference type="InParanoid" id="G2TRL0"/>
<dbReference type="PRO" id="PR:G2TRL0"/>
<dbReference type="Proteomes" id="UP000002485">
    <property type="component" value="Chromosome I"/>
</dbReference>
<dbReference type="GO" id="GO:0016020">
    <property type="term" value="C:membrane"/>
    <property type="evidence" value="ECO:0007669"/>
    <property type="project" value="UniProtKB-SubCell"/>
</dbReference>
<keyword id="KW-0472">Membrane</keyword>
<keyword id="KW-1185">Reference proteome</keyword>
<keyword id="KW-0812">Transmembrane</keyword>
<keyword id="KW-1133">Transmembrane helix</keyword>
<comment type="subcellular location">
    <subcellularLocation>
        <location evidence="2">Membrane</location>
        <topology evidence="2">Single-pass membrane protein</topology>
    </subcellularLocation>
</comment>
<sequence length="71" mass="8077">MLQKHNKVKQTSVVRLMKYRGGHFGGGGLSTAIYSIFAFFSIPLWEKFMTFYLELFSILNNLVTSISKGIL</sequence>
<proteinExistence type="predicted"/>
<organism>
    <name type="scientific">Schizosaccharomyces pombe (strain 972 / ATCC 24843)</name>
    <name type="common">Fission yeast</name>
    <dbReference type="NCBI Taxonomy" id="284812"/>
    <lineage>
        <taxon>Eukaryota</taxon>
        <taxon>Fungi</taxon>
        <taxon>Dikarya</taxon>
        <taxon>Ascomycota</taxon>
        <taxon>Taphrinomycotina</taxon>
        <taxon>Schizosaccharomycetes</taxon>
        <taxon>Schizosaccharomycetales</taxon>
        <taxon>Schizosaccharomycetaceae</taxon>
        <taxon>Schizosaccharomyces</taxon>
    </lineage>
</organism>
<name>YLX9_SCHPO</name>